<name>ATPB_CUSRE</name>
<organism>
    <name type="scientific">Cuscuta reflexa</name>
    <name type="common">Southern Asian dodder</name>
    <dbReference type="NCBI Taxonomy" id="4129"/>
    <lineage>
        <taxon>Eukaryota</taxon>
        <taxon>Viridiplantae</taxon>
        <taxon>Streptophyta</taxon>
        <taxon>Embryophyta</taxon>
        <taxon>Tracheophyta</taxon>
        <taxon>Spermatophyta</taxon>
        <taxon>Magnoliopsida</taxon>
        <taxon>eudicotyledons</taxon>
        <taxon>Gunneridae</taxon>
        <taxon>Pentapetalae</taxon>
        <taxon>asterids</taxon>
        <taxon>lamiids</taxon>
        <taxon>Solanales</taxon>
        <taxon>Convolvulaceae</taxon>
        <taxon>Cuscuteae</taxon>
        <taxon>Cuscuta</taxon>
        <taxon>Cuscuta subgen. Monogynella</taxon>
    </lineage>
</organism>
<keyword id="KW-0066">ATP synthesis</keyword>
<keyword id="KW-0067">ATP-binding</keyword>
<keyword id="KW-0139">CF(1)</keyword>
<keyword id="KW-0375">Hydrogen ion transport</keyword>
<keyword id="KW-0406">Ion transport</keyword>
<keyword id="KW-0472">Membrane</keyword>
<keyword id="KW-0547">Nucleotide-binding</keyword>
<keyword id="KW-0934">Plastid</keyword>
<keyword id="KW-0793">Thylakoid</keyword>
<keyword id="KW-1278">Translocase</keyword>
<keyword id="KW-0813">Transport</keyword>
<feature type="chain" id="PRO_0000144507" description="ATP synthase subunit beta, plastid">
    <location>
        <begin position="1"/>
        <end position="490"/>
    </location>
</feature>
<feature type="binding site" evidence="1">
    <location>
        <begin position="170"/>
        <end position="177"/>
    </location>
    <ligand>
        <name>ATP</name>
        <dbReference type="ChEBI" id="CHEBI:30616"/>
    </ligand>
</feature>
<sequence length="490" mass="53233">MRINPPTYGSEISSIEKKNRGHIVQIIGPVLDVAFPPGKMPNIYNALIVKGRDTEQMNVTCEVQQLLGNNRVRAVAMNDTDGLMRGMEVIDTGTPITVPVGGSTLGRIFNVLGEPVDNLGPVDTNTTFTIHRSAPAFIQLDTKLSIFETGIKVVDLLAPYRRGGKIGLFGGAGVGKTVLIMELINNIAKAHGGVSVFGGVGERTREGNDLYMEMKESGVINEKNITESKVALVYGQMNEPPGARMRVGLTALTMAEYFRDVNEQDVLLFIDNIFRFVQAGSEVSALLGRMPSAVGYQPTLSTEMGSLQERITSTKEGSITSIQAVYVPADDLTDPAPATTFAHLDATTVLSRGLAAKGIYPAVDPLDSTSMMLQPRLVGEEHYETAQKVKQTLQRYKELQDIIAILGLDELSEEDRLTVARARKIERFLSQPFFVAEVFTGSPGKYVGLAETIIGFTLILSGELDSLPEQAFYLVGNINEATEKAMNLKT</sequence>
<evidence type="ECO:0000255" key="1">
    <source>
        <dbReference type="HAMAP-Rule" id="MF_01347"/>
    </source>
</evidence>
<evidence type="ECO:0000305" key="2"/>
<geneLocation type="plastid"/>
<protein>
    <recommendedName>
        <fullName evidence="1">ATP synthase subunit beta, plastid</fullName>
        <ecNumber evidence="1">7.1.2.2</ecNumber>
    </recommendedName>
    <alternativeName>
        <fullName evidence="1">ATP synthase F1 sector subunit beta</fullName>
    </alternativeName>
    <alternativeName>
        <fullName evidence="1">F-ATPase subunit beta</fullName>
    </alternativeName>
</protein>
<dbReference type="EC" id="7.1.2.2" evidence="1"/>
<dbReference type="EMBL" id="X61698">
    <property type="protein sequence ID" value="CAA43866.1"/>
    <property type="molecule type" value="Genomic_DNA"/>
</dbReference>
<dbReference type="EMBL" id="AM711640">
    <property type="protein sequence ID" value="CAM98407.1"/>
    <property type="molecule type" value="Genomic_DNA"/>
</dbReference>
<dbReference type="PIR" id="S20476">
    <property type="entry name" value="S20476"/>
</dbReference>
<dbReference type="RefSeq" id="YP_001430121.1">
    <property type="nucleotide sequence ID" value="NC_009766.1"/>
</dbReference>
<dbReference type="SMR" id="P30399"/>
<dbReference type="GeneID" id="5536615"/>
<dbReference type="GO" id="GO:0009535">
    <property type="term" value="C:chloroplast thylakoid membrane"/>
    <property type="evidence" value="ECO:0007669"/>
    <property type="project" value="TreeGrafter"/>
</dbReference>
<dbReference type="GO" id="GO:0005739">
    <property type="term" value="C:mitochondrion"/>
    <property type="evidence" value="ECO:0007669"/>
    <property type="project" value="GOC"/>
</dbReference>
<dbReference type="GO" id="GO:0045259">
    <property type="term" value="C:proton-transporting ATP synthase complex"/>
    <property type="evidence" value="ECO:0007669"/>
    <property type="project" value="UniProtKB-KW"/>
</dbReference>
<dbReference type="GO" id="GO:0005524">
    <property type="term" value="F:ATP binding"/>
    <property type="evidence" value="ECO:0007669"/>
    <property type="project" value="UniProtKB-KW"/>
</dbReference>
<dbReference type="GO" id="GO:0016887">
    <property type="term" value="F:ATP hydrolysis activity"/>
    <property type="evidence" value="ECO:0007669"/>
    <property type="project" value="InterPro"/>
</dbReference>
<dbReference type="GO" id="GO:0046933">
    <property type="term" value="F:proton-transporting ATP synthase activity, rotational mechanism"/>
    <property type="evidence" value="ECO:0007669"/>
    <property type="project" value="InterPro"/>
</dbReference>
<dbReference type="GO" id="GO:0042776">
    <property type="term" value="P:proton motive force-driven mitochondrial ATP synthesis"/>
    <property type="evidence" value="ECO:0007669"/>
    <property type="project" value="TreeGrafter"/>
</dbReference>
<dbReference type="CDD" id="cd18110">
    <property type="entry name" value="ATP-synt_F1_beta_C"/>
    <property type="match status" value="1"/>
</dbReference>
<dbReference type="CDD" id="cd18115">
    <property type="entry name" value="ATP-synt_F1_beta_N"/>
    <property type="match status" value="1"/>
</dbReference>
<dbReference type="CDD" id="cd01133">
    <property type="entry name" value="F1-ATPase_beta_CD"/>
    <property type="match status" value="1"/>
</dbReference>
<dbReference type="FunFam" id="1.10.1140.10:FF:000001">
    <property type="entry name" value="ATP synthase subunit beta"/>
    <property type="match status" value="1"/>
</dbReference>
<dbReference type="FunFam" id="3.40.50.12240:FF:000006">
    <property type="entry name" value="ATP synthase subunit beta"/>
    <property type="match status" value="1"/>
</dbReference>
<dbReference type="FunFam" id="3.40.50.300:FF:000004">
    <property type="entry name" value="ATP synthase subunit beta"/>
    <property type="match status" value="1"/>
</dbReference>
<dbReference type="FunFam" id="2.40.10.170:FF:000002">
    <property type="entry name" value="ATP synthase subunit beta, chloroplastic"/>
    <property type="match status" value="1"/>
</dbReference>
<dbReference type="Gene3D" id="2.40.10.170">
    <property type="match status" value="1"/>
</dbReference>
<dbReference type="Gene3D" id="1.10.1140.10">
    <property type="entry name" value="Bovine Mitochondrial F1-atpase, Atp Synthase Beta Chain, Chain D, domain 3"/>
    <property type="match status" value="1"/>
</dbReference>
<dbReference type="Gene3D" id="3.40.50.300">
    <property type="entry name" value="P-loop containing nucleotide triphosphate hydrolases"/>
    <property type="match status" value="1"/>
</dbReference>
<dbReference type="HAMAP" id="MF_01347">
    <property type="entry name" value="ATP_synth_beta_bact"/>
    <property type="match status" value="1"/>
</dbReference>
<dbReference type="InterPro" id="IPR003593">
    <property type="entry name" value="AAA+_ATPase"/>
</dbReference>
<dbReference type="InterPro" id="IPR055190">
    <property type="entry name" value="ATP-synt_VA_C"/>
</dbReference>
<dbReference type="InterPro" id="IPR005722">
    <property type="entry name" value="ATP_synth_F1_bsu"/>
</dbReference>
<dbReference type="InterPro" id="IPR020003">
    <property type="entry name" value="ATPase_a/bsu_AS"/>
</dbReference>
<dbReference type="InterPro" id="IPR050053">
    <property type="entry name" value="ATPase_alpha/beta_chains"/>
</dbReference>
<dbReference type="InterPro" id="IPR004100">
    <property type="entry name" value="ATPase_F1/V1/A1_a/bsu_N"/>
</dbReference>
<dbReference type="InterPro" id="IPR036121">
    <property type="entry name" value="ATPase_F1/V1/A1_a/bsu_N_sf"/>
</dbReference>
<dbReference type="InterPro" id="IPR000194">
    <property type="entry name" value="ATPase_F1/V1/A1_a/bsu_nucl-bd"/>
</dbReference>
<dbReference type="InterPro" id="IPR024034">
    <property type="entry name" value="ATPase_F1/V1_b/a_C"/>
</dbReference>
<dbReference type="InterPro" id="IPR027417">
    <property type="entry name" value="P-loop_NTPase"/>
</dbReference>
<dbReference type="NCBIfam" id="TIGR01039">
    <property type="entry name" value="atpD"/>
    <property type="match status" value="1"/>
</dbReference>
<dbReference type="PANTHER" id="PTHR15184">
    <property type="entry name" value="ATP SYNTHASE"/>
    <property type="match status" value="1"/>
</dbReference>
<dbReference type="PANTHER" id="PTHR15184:SF71">
    <property type="entry name" value="ATP SYNTHASE SUBUNIT BETA, MITOCHONDRIAL"/>
    <property type="match status" value="1"/>
</dbReference>
<dbReference type="Pfam" id="PF00006">
    <property type="entry name" value="ATP-synt_ab"/>
    <property type="match status" value="1"/>
</dbReference>
<dbReference type="Pfam" id="PF02874">
    <property type="entry name" value="ATP-synt_ab_N"/>
    <property type="match status" value="1"/>
</dbReference>
<dbReference type="Pfam" id="PF22919">
    <property type="entry name" value="ATP-synt_VA_C"/>
    <property type="match status" value="1"/>
</dbReference>
<dbReference type="SMART" id="SM00382">
    <property type="entry name" value="AAA"/>
    <property type="match status" value="1"/>
</dbReference>
<dbReference type="SUPFAM" id="SSF47917">
    <property type="entry name" value="C-terminal domain of alpha and beta subunits of F1 ATP synthase"/>
    <property type="match status" value="1"/>
</dbReference>
<dbReference type="SUPFAM" id="SSF50615">
    <property type="entry name" value="N-terminal domain of alpha and beta subunits of F1 ATP synthase"/>
    <property type="match status" value="1"/>
</dbReference>
<dbReference type="SUPFAM" id="SSF52540">
    <property type="entry name" value="P-loop containing nucleoside triphosphate hydrolases"/>
    <property type="match status" value="1"/>
</dbReference>
<dbReference type="PROSITE" id="PS00152">
    <property type="entry name" value="ATPASE_ALPHA_BETA"/>
    <property type="match status" value="1"/>
</dbReference>
<comment type="function">
    <text evidence="1">Produces ATP from ADP in the presence of a proton gradient across the membrane. The catalytic sites are hosted primarily by the beta subunits.</text>
</comment>
<comment type="catalytic activity">
    <reaction evidence="1">
        <text>ATP + H2O + 4 H(+)(in) = ADP + phosphate + 5 H(+)(out)</text>
        <dbReference type="Rhea" id="RHEA:57720"/>
        <dbReference type="ChEBI" id="CHEBI:15377"/>
        <dbReference type="ChEBI" id="CHEBI:15378"/>
        <dbReference type="ChEBI" id="CHEBI:30616"/>
        <dbReference type="ChEBI" id="CHEBI:43474"/>
        <dbReference type="ChEBI" id="CHEBI:456216"/>
        <dbReference type="EC" id="7.1.2.2"/>
    </reaction>
</comment>
<comment type="subunit">
    <text evidence="1">F-type ATPases have 2 components, CF(1) - the catalytic core - and CF(0) - the membrane proton channel. CF(1) has five subunits: alpha(3), beta(3), gamma(1), delta(1), epsilon(1). CF(0) has four main subunits: a(1), b(1), b'(1) and c(9-12).</text>
</comment>
<comment type="subcellular location">
    <subcellularLocation>
        <location evidence="2">Plastid thylakoid membrane</location>
        <topology evidence="1">Peripheral membrane protein</topology>
    </subcellularLocation>
</comment>
<comment type="similarity">
    <text evidence="1">Belongs to the ATPase alpha/beta chains family.</text>
</comment>
<comment type="caution">
    <text evidence="2">Young tissue from this organism is photosynthetic and contains some thylakoids, although the photosynthetic activity does not exceed the light compensation point.</text>
</comment>
<accession>P30399</accession>
<accession>A7M979</accession>
<gene>
    <name evidence="1" type="primary">atpB</name>
</gene>
<reference key="1">
    <citation type="journal article" date="1992" name="Mol. Gen. Genet.">
        <title>Organization and sequence of photosynthetic genes from the plastid genome of the holoparasitic flowering plant Cuscuta reflexa.</title>
        <authorList>
            <person name="Haberhausen G."/>
            <person name="Valentin K.-U."/>
            <person name="Zetsche K."/>
        </authorList>
    </citation>
    <scope>NUCLEOTIDE SEQUENCE [GENOMIC DNA]</scope>
    <source>
        <strain>ROXB</strain>
    </source>
</reference>
<reference key="2">
    <citation type="journal article" date="2007" name="BMC Plant Biol.">
        <title>Complete DNA sequences of the plastid genomes of two parasitic flowering plant species, Cuscuta reflexa and Cuscuta gronovii.</title>
        <authorList>
            <person name="Funk H.T."/>
            <person name="Berg S."/>
            <person name="Krupinska K."/>
            <person name="Maier U.-G."/>
            <person name="Krause K."/>
        </authorList>
    </citation>
    <scope>NUCLEOTIDE SEQUENCE [LARGE SCALE GENOMIC DNA]</scope>
</reference>
<proteinExistence type="inferred from homology"/>